<keyword id="KW-0030">Aminoacyl-tRNA synthetase</keyword>
<keyword id="KW-0067">ATP-binding</keyword>
<keyword id="KW-0963">Cytoplasm</keyword>
<keyword id="KW-0436">Ligase</keyword>
<keyword id="KW-0479">Metal-binding</keyword>
<keyword id="KW-0547">Nucleotide-binding</keyword>
<keyword id="KW-0648">Protein biosynthesis</keyword>
<keyword id="KW-1185">Reference proteome</keyword>
<keyword id="KW-0694">RNA-binding</keyword>
<keyword id="KW-0820">tRNA-binding</keyword>
<keyword id="KW-0862">Zinc</keyword>
<dbReference type="EC" id="6.1.1.7" evidence="1"/>
<dbReference type="EMBL" id="CP000435">
    <property type="protein sequence ID" value="ABI46285.1"/>
    <property type="molecule type" value="Genomic_DNA"/>
</dbReference>
<dbReference type="RefSeq" id="WP_011620657.1">
    <property type="nucleotide sequence ID" value="NC_008319.1"/>
</dbReference>
<dbReference type="SMR" id="Q0I6G6"/>
<dbReference type="STRING" id="64471.sync_2768"/>
<dbReference type="KEGG" id="syg:sync_2768"/>
<dbReference type="eggNOG" id="COG0013">
    <property type="taxonomic scope" value="Bacteria"/>
</dbReference>
<dbReference type="HOGENOM" id="CLU_004485_1_0_3"/>
<dbReference type="OrthoDB" id="9803884at2"/>
<dbReference type="Proteomes" id="UP000001961">
    <property type="component" value="Chromosome"/>
</dbReference>
<dbReference type="GO" id="GO:0005829">
    <property type="term" value="C:cytosol"/>
    <property type="evidence" value="ECO:0007669"/>
    <property type="project" value="TreeGrafter"/>
</dbReference>
<dbReference type="GO" id="GO:0004813">
    <property type="term" value="F:alanine-tRNA ligase activity"/>
    <property type="evidence" value="ECO:0007669"/>
    <property type="project" value="UniProtKB-UniRule"/>
</dbReference>
<dbReference type="GO" id="GO:0002161">
    <property type="term" value="F:aminoacyl-tRNA deacylase activity"/>
    <property type="evidence" value="ECO:0007669"/>
    <property type="project" value="TreeGrafter"/>
</dbReference>
<dbReference type="GO" id="GO:0005524">
    <property type="term" value="F:ATP binding"/>
    <property type="evidence" value="ECO:0007669"/>
    <property type="project" value="UniProtKB-UniRule"/>
</dbReference>
<dbReference type="GO" id="GO:0000049">
    <property type="term" value="F:tRNA binding"/>
    <property type="evidence" value="ECO:0007669"/>
    <property type="project" value="UniProtKB-KW"/>
</dbReference>
<dbReference type="GO" id="GO:0008270">
    <property type="term" value="F:zinc ion binding"/>
    <property type="evidence" value="ECO:0007669"/>
    <property type="project" value="UniProtKB-UniRule"/>
</dbReference>
<dbReference type="GO" id="GO:0006419">
    <property type="term" value="P:alanyl-tRNA aminoacylation"/>
    <property type="evidence" value="ECO:0007669"/>
    <property type="project" value="UniProtKB-UniRule"/>
</dbReference>
<dbReference type="CDD" id="cd00673">
    <property type="entry name" value="AlaRS_core"/>
    <property type="match status" value="1"/>
</dbReference>
<dbReference type="FunFam" id="3.10.310.40:FF:000001">
    <property type="entry name" value="Alanine--tRNA ligase"/>
    <property type="match status" value="1"/>
</dbReference>
<dbReference type="FunFam" id="3.30.54.20:FF:000001">
    <property type="entry name" value="Alanine--tRNA ligase"/>
    <property type="match status" value="1"/>
</dbReference>
<dbReference type="FunFam" id="3.30.930.10:FF:000004">
    <property type="entry name" value="Alanine--tRNA ligase"/>
    <property type="match status" value="1"/>
</dbReference>
<dbReference type="FunFam" id="3.30.980.10:FF:000004">
    <property type="entry name" value="Alanine--tRNA ligase, cytoplasmic"/>
    <property type="match status" value="1"/>
</dbReference>
<dbReference type="Gene3D" id="2.40.30.130">
    <property type="match status" value="1"/>
</dbReference>
<dbReference type="Gene3D" id="3.10.310.40">
    <property type="match status" value="1"/>
</dbReference>
<dbReference type="Gene3D" id="3.30.54.20">
    <property type="match status" value="1"/>
</dbReference>
<dbReference type="Gene3D" id="6.10.250.550">
    <property type="match status" value="1"/>
</dbReference>
<dbReference type="Gene3D" id="3.30.930.10">
    <property type="entry name" value="Bira Bifunctional Protein, Domain 2"/>
    <property type="match status" value="1"/>
</dbReference>
<dbReference type="Gene3D" id="3.30.980.10">
    <property type="entry name" value="Threonyl-trna Synthetase, Chain A, domain 2"/>
    <property type="match status" value="1"/>
</dbReference>
<dbReference type="HAMAP" id="MF_00036_B">
    <property type="entry name" value="Ala_tRNA_synth_B"/>
    <property type="match status" value="1"/>
</dbReference>
<dbReference type="InterPro" id="IPR045864">
    <property type="entry name" value="aa-tRNA-synth_II/BPL/LPL"/>
</dbReference>
<dbReference type="InterPro" id="IPR002318">
    <property type="entry name" value="Ala-tRNA-lgiase_IIc"/>
</dbReference>
<dbReference type="InterPro" id="IPR018162">
    <property type="entry name" value="Ala-tRNA-ligase_IIc_anticod-bd"/>
</dbReference>
<dbReference type="InterPro" id="IPR018165">
    <property type="entry name" value="Ala-tRNA-synth_IIc_core"/>
</dbReference>
<dbReference type="InterPro" id="IPR018164">
    <property type="entry name" value="Ala-tRNA-synth_IIc_N"/>
</dbReference>
<dbReference type="InterPro" id="IPR050058">
    <property type="entry name" value="Ala-tRNA_ligase"/>
</dbReference>
<dbReference type="InterPro" id="IPR023033">
    <property type="entry name" value="Ala_tRNA_ligase_euk/bac"/>
</dbReference>
<dbReference type="InterPro" id="IPR003156">
    <property type="entry name" value="DHHA1_dom"/>
</dbReference>
<dbReference type="InterPro" id="IPR018163">
    <property type="entry name" value="Thr/Ala-tRNA-synth_IIc_edit"/>
</dbReference>
<dbReference type="InterPro" id="IPR009000">
    <property type="entry name" value="Transl_B-barrel_sf"/>
</dbReference>
<dbReference type="InterPro" id="IPR012947">
    <property type="entry name" value="tRNA_SAD"/>
</dbReference>
<dbReference type="NCBIfam" id="TIGR00344">
    <property type="entry name" value="alaS"/>
    <property type="match status" value="1"/>
</dbReference>
<dbReference type="PANTHER" id="PTHR11777:SF9">
    <property type="entry name" value="ALANINE--TRNA LIGASE, CYTOPLASMIC"/>
    <property type="match status" value="1"/>
</dbReference>
<dbReference type="PANTHER" id="PTHR11777">
    <property type="entry name" value="ALANYL-TRNA SYNTHETASE"/>
    <property type="match status" value="1"/>
</dbReference>
<dbReference type="Pfam" id="PF02272">
    <property type="entry name" value="DHHA1"/>
    <property type="match status" value="1"/>
</dbReference>
<dbReference type="Pfam" id="PF01411">
    <property type="entry name" value="tRNA-synt_2c"/>
    <property type="match status" value="1"/>
</dbReference>
<dbReference type="Pfam" id="PF07973">
    <property type="entry name" value="tRNA_SAD"/>
    <property type="match status" value="1"/>
</dbReference>
<dbReference type="PRINTS" id="PR00980">
    <property type="entry name" value="TRNASYNTHALA"/>
</dbReference>
<dbReference type="SMART" id="SM00863">
    <property type="entry name" value="tRNA_SAD"/>
    <property type="match status" value="1"/>
</dbReference>
<dbReference type="SUPFAM" id="SSF55681">
    <property type="entry name" value="Class II aaRS and biotin synthetases"/>
    <property type="match status" value="1"/>
</dbReference>
<dbReference type="SUPFAM" id="SSF101353">
    <property type="entry name" value="Putative anticodon-binding domain of alanyl-tRNA synthetase (AlaRS)"/>
    <property type="match status" value="1"/>
</dbReference>
<dbReference type="SUPFAM" id="SSF55186">
    <property type="entry name" value="ThrRS/AlaRS common domain"/>
    <property type="match status" value="1"/>
</dbReference>
<dbReference type="SUPFAM" id="SSF50447">
    <property type="entry name" value="Translation proteins"/>
    <property type="match status" value="1"/>
</dbReference>
<dbReference type="PROSITE" id="PS50860">
    <property type="entry name" value="AA_TRNA_LIGASE_II_ALA"/>
    <property type="match status" value="1"/>
</dbReference>
<protein>
    <recommendedName>
        <fullName evidence="1">Alanine--tRNA ligase</fullName>
        <ecNumber evidence="1">6.1.1.7</ecNumber>
    </recommendedName>
    <alternativeName>
        <fullName evidence="1">Alanyl-tRNA synthetase</fullName>
        <shortName evidence="1">AlaRS</shortName>
    </alternativeName>
</protein>
<proteinExistence type="inferred from homology"/>
<feature type="chain" id="PRO_0000347837" description="Alanine--tRNA ligase">
    <location>
        <begin position="1"/>
        <end position="893"/>
    </location>
</feature>
<feature type="binding site" evidence="1">
    <location>
        <position position="575"/>
    </location>
    <ligand>
        <name>Zn(2+)</name>
        <dbReference type="ChEBI" id="CHEBI:29105"/>
    </ligand>
</feature>
<feature type="binding site" evidence="1">
    <location>
        <position position="579"/>
    </location>
    <ligand>
        <name>Zn(2+)</name>
        <dbReference type="ChEBI" id="CHEBI:29105"/>
    </ligand>
</feature>
<feature type="binding site" evidence="1">
    <location>
        <position position="677"/>
    </location>
    <ligand>
        <name>Zn(2+)</name>
        <dbReference type="ChEBI" id="CHEBI:29105"/>
    </ligand>
</feature>
<feature type="binding site" evidence="1">
    <location>
        <position position="681"/>
    </location>
    <ligand>
        <name>Zn(2+)</name>
        <dbReference type="ChEBI" id="CHEBI:29105"/>
    </ligand>
</feature>
<organism>
    <name type="scientific">Synechococcus sp. (strain CC9311)</name>
    <dbReference type="NCBI Taxonomy" id="64471"/>
    <lineage>
        <taxon>Bacteria</taxon>
        <taxon>Bacillati</taxon>
        <taxon>Cyanobacteriota</taxon>
        <taxon>Cyanophyceae</taxon>
        <taxon>Synechococcales</taxon>
        <taxon>Synechococcaceae</taxon>
        <taxon>Synechococcus</taxon>
    </lineage>
</organism>
<name>SYA_SYNS3</name>
<reference key="1">
    <citation type="journal article" date="2006" name="Proc. Natl. Acad. Sci. U.S.A.">
        <title>Genome sequence of Synechococcus CC9311: insights into adaptation to a coastal environment.</title>
        <authorList>
            <person name="Palenik B."/>
            <person name="Ren Q."/>
            <person name="Dupont C.L."/>
            <person name="Myers G.S."/>
            <person name="Heidelberg J.F."/>
            <person name="Badger J.H."/>
            <person name="Madupu R."/>
            <person name="Nelson W.C."/>
            <person name="Brinkac L.M."/>
            <person name="Dodson R.J."/>
            <person name="Durkin A.S."/>
            <person name="Daugherty S.C."/>
            <person name="Sullivan S.A."/>
            <person name="Khouri H."/>
            <person name="Mohamoud Y."/>
            <person name="Halpin R."/>
            <person name="Paulsen I.T."/>
        </authorList>
    </citation>
    <scope>NUCLEOTIDE SEQUENCE [LARGE SCALE GENOMIC DNA]</scope>
    <source>
        <strain>CC9311</strain>
    </source>
</reference>
<evidence type="ECO:0000255" key="1">
    <source>
        <dbReference type="HAMAP-Rule" id="MF_00036"/>
    </source>
</evidence>
<gene>
    <name evidence="1" type="primary">alaS</name>
    <name type="ordered locus">sync_2768</name>
</gene>
<comment type="function">
    <text evidence="1">Catalyzes the attachment of alanine to tRNA(Ala) in a two-step reaction: alanine is first activated by ATP to form Ala-AMP and then transferred to the acceptor end of tRNA(Ala). Also edits incorrectly charged Ser-tRNA(Ala) and Gly-tRNA(Ala) via its editing domain.</text>
</comment>
<comment type="catalytic activity">
    <reaction evidence="1">
        <text>tRNA(Ala) + L-alanine + ATP = L-alanyl-tRNA(Ala) + AMP + diphosphate</text>
        <dbReference type="Rhea" id="RHEA:12540"/>
        <dbReference type="Rhea" id="RHEA-COMP:9657"/>
        <dbReference type="Rhea" id="RHEA-COMP:9923"/>
        <dbReference type="ChEBI" id="CHEBI:30616"/>
        <dbReference type="ChEBI" id="CHEBI:33019"/>
        <dbReference type="ChEBI" id="CHEBI:57972"/>
        <dbReference type="ChEBI" id="CHEBI:78442"/>
        <dbReference type="ChEBI" id="CHEBI:78497"/>
        <dbReference type="ChEBI" id="CHEBI:456215"/>
        <dbReference type="EC" id="6.1.1.7"/>
    </reaction>
</comment>
<comment type="cofactor">
    <cofactor evidence="1">
        <name>Zn(2+)</name>
        <dbReference type="ChEBI" id="CHEBI:29105"/>
    </cofactor>
    <text evidence="1">Binds 1 zinc ion per subunit.</text>
</comment>
<comment type="subcellular location">
    <subcellularLocation>
        <location evidence="1">Cytoplasm</location>
    </subcellularLocation>
</comment>
<comment type="domain">
    <text evidence="1">Consists of three domains; the N-terminal catalytic domain, the editing domain and the C-terminal C-Ala domain. The editing domain removes incorrectly charged amino acids, while the C-Ala domain, along with tRNA(Ala), serves as a bridge to cooperatively bring together the editing and aminoacylation centers thus stimulating deacylation of misacylated tRNAs.</text>
</comment>
<comment type="similarity">
    <text evidence="1">Belongs to the class-II aminoacyl-tRNA synthetase family.</text>
</comment>
<accession>Q0I6G6</accession>
<sequence>MAVARSSRSAAATPRSGAEIRAAFLSFYEERGHKVMASASLIPEDPTVLLTIAGMLPFKPVFLGQQKRPAPRATSSQKCIRTNDIENVGRTARHHTFFEMLGNFSFGDYFKQQAIEWAWELSTDLFGIDPKHLVVSVFREDDEAEQIWRDVVGVNPKRIIRMDEADNFWASGPTGPCGPCSEIYYDFNPELGDEGIDLEDDDRFIEFYNLVFMQYNRDAEGTLTPLANRNIDTGLGLERMAQILQKVPNNYETDLIFPLIQAAADLAGVDYHQLDDAGQTSLKVIGDHSRAVTQLICDGVSASNLGRGYILRRLLRRVVRHGRLLGIHQPFLVTMGQASIALLKDAYPSVIERQEVILAELQREESRFLETLERGEKLLADVLESKPKQISGAQAFELYDTYGFPLELTQEIAEEHGLDVDLAGFEQAMEQQRQRAKAAAVSIDLTLQDAIDQVAADLNATSFEGYDLLVQSSSTVQALLVNGEAAASASDGDVVQVVLDNTPFYGEGGGQVGDRGLLVGDGPDGNGLIVVIEGVSRNRGVFVHSGRVQLGRLGVGDVVHGQVDRACRRRAQANHTATHLLQAALKQVVDEGIGQAGSLVNFERLRFDFHCPRAVKPEELEQIETLINGWISDAQSLEVNEMAIDQAKAAGAVAMFGEKYADVVRVVDVPGVSMELCGGTHVGNTAEIGLFKIVSESGVAAGIRRIEAVAGASVLAYLNEREVVVKQLGDRFKAQPGEIVERVVALQEELKNSQKALTAARSELAVAKSAALAVQAVAVGKHQLLVARLDGVNGDGLQGAALGLLDQLGDATAVVLGGLPDPSDQGKVILVAAFGKAVIATGQQAGKFIGAIAKLCGGGGGGRPNLAQAGGRDGAALDAALNTARAELKKTLG</sequence>